<gene>
    <name evidence="1" type="primary">rlmD</name>
    <name type="synonym">rumA</name>
    <name type="ordered locus">lpl1572</name>
</gene>
<dbReference type="EC" id="2.1.1.190" evidence="1"/>
<dbReference type="EMBL" id="CR628337">
    <property type="protein sequence ID" value="CAH15812.1"/>
    <property type="molecule type" value="Genomic_DNA"/>
</dbReference>
<dbReference type="RefSeq" id="WP_011215609.1">
    <property type="nucleotide sequence ID" value="NC_006369.1"/>
</dbReference>
<dbReference type="SMR" id="Q5WW81"/>
<dbReference type="KEGG" id="lpf:lpl1572"/>
<dbReference type="LegioList" id="lpl1572"/>
<dbReference type="HOGENOM" id="CLU_014689_8_2_6"/>
<dbReference type="Proteomes" id="UP000002517">
    <property type="component" value="Chromosome"/>
</dbReference>
<dbReference type="GO" id="GO:0051539">
    <property type="term" value="F:4 iron, 4 sulfur cluster binding"/>
    <property type="evidence" value="ECO:0007669"/>
    <property type="project" value="UniProtKB-KW"/>
</dbReference>
<dbReference type="GO" id="GO:0005506">
    <property type="term" value="F:iron ion binding"/>
    <property type="evidence" value="ECO:0007669"/>
    <property type="project" value="UniProtKB-UniRule"/>
</dbReference>
<dbReference type="GO" id="GO:0003723">
    <property type="term" value="F:RNA binding"/>
    <property type="evidence" value="ECO:0007669"/>
    <property type="project" value="InterPro"/>
</dbReference>
<dbReference type="GO" id="GO:0070041">
    <property type="term" value="F:rRNA (uridine-C5-)-methyltransferase activity"/>
    <property type="evidence" value="ECO:0007669"/>
    <property type="project" value="UniProtKB-UniRule"/>
</dbReference>
<dbReference type="GO" id="GO:0070475">
    <property type="term" value="P:rRNA base methylation"/>
    <property type="evidence" value="ECO:0007669"/>
    <property type="project" value="TreeGrafter"/>
</dbReference>
<dbReference type="CDD" id="cd02440">
    <property type="entry name" value="AdoMet_MTases"/>
    <property type="match status" value="1"/>
</dbReference>
<dbReference type="FunFam" id="3.40.50.150:FF:000009">
    <property type="entry name" value="23S rRNA (Uracil(1939)-C(5))-methyltransferase RlmD"/>
    <property type="match status" value="1"/>
</dbReference>
<dbReference type="FunFam" id="2.40.50.140:FF:000097">
    <property type="entry name" value="23S rRNA (uracil(1939)-C(5))-methyltransferase RlmD"/>
    <property type="match status" value="1"/>
</dbReference>
<dbReference type="Gene3D" id="2.40.50.1070">
    <property type="match status" value="1"/>
</dbReference>
<dbReference type="Gene3D" id="2.40.50.140">
    <property type="entry name" value="Nucleic acid-binding proteins"/>
    <property type="match status" value="1"/>
</dbReference>
<dbReference type="Gene3D" id="3.40.50.150">
    <property type="entry name" value="Vaccinia Virus protein VP39"/>
    <property type="match status" value="1"/>
</dbReference>
<dbReference type="HAMAP" id="MF_01010">
    <property type="entry name" value="23SrRNA_methyltr_RlmD"/>
    <property type="match status" value="1"/>
</dbReference>
<dbReference type="InterPro" id="IPR001566">
    <property type="entry name" value="23S_rRNA_MeTrfase_RlmD"/>
</dbReference>
<dbReference type="InterPro" id="IPR030390">
    <property type="entry name" value="MeTrfase_TrmA_AS"/>
</dbReference>
<dbReference type="InterPro" id="IPR030391">
    <property type="entry name" value="MeTrfase_TrmA_CS"/>
</dbReference>
<dbReference type="InterPro" id="IPR012340">
    <property type="entry name" value="NA-bd_OB-fold"/>
</dbReference>
<dbReference type="InterPro" id="IPR029063">
    <property type="entry name" value="SAM-dependent_MTases_sf"/>
</dbReference>
<dbReference type="InterPro" id="IPR002792">
    <property type="entry name" value="TRAM_dom"/>
</dbReference>
<dbReference type="InterPro" id="IPR010280">
    <property type="entry name" value="U5_MeTrfase_fam"/>
</dbReference>
<dbReference type="NCBIfam" id="NF009639">
    <property type="entry name" value="PRK13168.1"/>
    <property type="match status" value="1"/>
</dbReference>
<dbReference type="NCBIfam" id="TIGR00479">
    <property type="entry name" value="rumA"/>
    <property type="match status" value="1"/>
</dbReference>
<dbReference type="PANTHER" id="PTHR11061:SF49">
    <property type="entry name" value="23S RRNA (URACIL(1939)-C(5))-METHYLTRANSFERASE RLMD"/>
    <property type="match status" value="1"/>
</dbReference>
<dbReference type="PANTHER" id="PTHR11061">
    <property type="entry name" value="RNA M5U METHYLTRANSFERASE"/>
    <property type="match status" value="1"/>
</dbReference>
<dbReference type="Pfam" id="PF01938">
    <property type="entry name" value="TRAM"/>
    <property type="match status" value="1"/>
</dbReference>
<dbReference type="Pfam" id="PF05958">
    <property type="entry name" value="tRNA_U5-meth_tr"/>
    <property type="match status" value="1"/>
</dbReference>
<dbReference type="SUPFAM" id="SSF50249">
    <property type="entry name" value="Nucleic acid-binding proteins"/>
    <property type="match status" value="1"/>
</dbReference>
<dbReference type="SUPFAM" id="SSF53335">
    <property type="entry name" value="S-adenosyl-L-methionine-dependent methyltransferases"/>
    <property type="match status" value="1"/>
</dbReference>
<dbReference type="PROSITE" id="PS51687">
    <property type="entry name" value="SAM_MT_RNA_M5U"/>
    <property type="match status" value="1"/>
</dbReference>
<dbReference type="PROSITE" id="PS50926">
    <property type="entry name" value="TRAM"/>
    <property type="match status" value="1"/>
</dbReference>
<dbReference type="PROSITE" id="PS01230">
    <property type="entry name" value="TRMA_1"/>
    <property type="match status" value="1"/>
</dbReference>
<dbReference type="PROSITE" id="PS01231">
    <property type="entry name" value="TRMA_2"/>
    <property type="match status" value="1"/>
</dbReference>
<reference key="1">
    <citation type="journal article" date="2004" name="Nat. Genet.">
        <title>Evidence in the Legionella pneumophila genome for exploitation of host cell functions and high genome plasticity.</title>
        <authorList>
            <person name="Cazalet C."/>
            <person name="Rusniok C."/>
            <person name="Brueggemann H."/>
            <person name="Zidane N."/>
            <person name="Magnier A."/>
            <person name="Ma L."/>
            <person name="Tichit M."/>
            <person name="Jarraud S."/>
            <person name="Bouchier C."/>
            <person name="Vandenesch F."/>
            <person name="Kunst F."/>
            <person name="Etienne J."/>
            <person name="Glaser P."/>
            <person name="Buchrieser C."/>
        </authorList>
    </citation>
    <scope>NUCLEOTIDE SEQUENCE [LARGE SCALE GENOMIC DNA]</scope>
    <source>
        <strain>Lens</strain>
    </source>
</reference>
<sequence length="444" mass="50446">MRKVKPKLNLTSQTARIVNLSHDGRGIARINGKATFIQGALPGEVVEFQYTRVKKDFDEGKLLSIVEPSTLRVEPKCPHYQMCGGCSLQHMSAEEQIRFKQSHLLDLLSRYGHTAPQTVLSPLTSHPWNYRNKARLSTRFVEKKQSTMVGFRERNNPRFITEINQCPILNSKIDTDIVHLRKLIDTMEDKQCIAQIEVAAGDNEVALIFRNLTPLTEQDESKIRKFAQQFQYKVFLQPGGLDSVFCFYPSDAHAYLSYELPDYQITFQFHPNDFTQVNAELNRKMVKQAIQLMELKNSDIVLDLFCGLGNFSLPMAKHCSRVIGVEGNRNMVERAYMNAKSNHITNVDFYAANLDDVMEVRNLVNTSFSKVLIDPPRSGALEIVKQIDSIDPERIVYVSCNPITLARDTDILVNQKGYVLITAGVMDMFPHTAHVESIALFQKG</sequence>
<keyword id="KW-0004">4Fe-4S</keyword>
<keyword id="KW-0408">Iron</keyword>
<keyword id="KW-0411">Iron-sulfur</keyword>
<keyword id="KW-0479">Metal-binding</keyword>
<keyword id="KW-0489">Methyltransferase</keyword>
<keyword id="KW-0698">rRNA processing</keyword>
<keyword id="KW-0949">S-adenosyl-L-methionine</keyword>
<keyword id="KW-0808">Transferase</keyword>
<organism>
    <name type="scientific">Legionella pneumophila (strain Lens)</name>
    <dbReference type="NCBI Taxonomy" id="297245"/>
    <lineage>
        <taxon>Bacteria</taxon>
        <taxon>Pseudomonadati</taxon>
        <taxon>Pseudomonadota</taxon>
        <taxon>Gammaproteobacteria</taxon>
        <taxon>Legionellales</taxon>
        <taxon>Legionellaceae</taxon>
        <taxon>Legionella</taxon>
    </lineage>
</organism>
<protein>
    <recommendedName>
        <fullName evidence="1">23S rRNA (uracil(1939)-C(5))-methyltransferase RlmD</fullName>
        <ecNumber evidence="1">2.1.1.190</ecNumber>
    </recommendedName>
    <alternativeName>
        <fullName evidence="1">23S rRNA(m5U1939)-methyltransferase</fullName>
    </alternativeName>
</protein>
<accession>Q5WW81</accession>
<feature type="chain" id="PRO_0000161901" description="23S rRNA (uracil(1939)-C(5))-methyltransferase RlmD">
    <location>
        <begin position="1"/>
        <end position="444"/>
    </location>
</feature>
<feature type="domain" description="TRAM" evidence="1">
    <location>
        <begin position="5"/>
        <end position="64"/>
    </location>
</feature>
<feature type="active site" description="Nucleophile" evidence="1">
    <location>
        <position position="400"/>
    </location>
</feature>
<feature type="binding site" evidence="1">
    <location>
        <position position="77"/>
    </location>
    <ligand>
        <name>[4Fe-4S] cluster</name>
        <dbReference type="ChEBI" id="CHEBI:49883"/>
    </ligand>
</feature>
<feature type="binding site" evidence="1">
    <location>
        <position position="83"/>
    </location>
    <ligand>
        <name>[4Fe-4S] cluster</name>
        <dbReference type="ChEBI" id="CHEBI:49883"/>
    </ligand>
</feature>
<feature type="binding site" evidence="1">
    <location>
        <position position="86"/>
    </location>
    <ligand>
        <name>[4Fe-4S] cluster</name>
        <dbReference type="ChEBI" id="CHEBI:49883"/>
    </ligand>
</feature>
<feature type="binding site" evidence="1">
    <location>
        <position position="166"/>
    </location>
    <ligand>
        <name>[4Fe-4S] cluster</name>
        <dbReference type="ChEBI" id="CHEBI:49883"/>
    </ligand>
</feature>
<feature type="binding site" evidence="1">
    <location>
        <position position="276"/>
    </location>
    <ligand>
        <name>S-adenosyl-L-methionine</name>
        <dbReference type="ChEBI" id="CHEBI:59789"/>
    </ligand>
</feature>
<feature type="binding site" evidence="1">
    <location>
        <position position="305"/>
    </location>
    <ligand>
        <name>S-adenosyl-L-methionine</name>
        <dbReference type="ChEBI" id="CHEBI:59789"/>
    </ligand>
</feature>
<feature type="binding site" evidence="1">
    <location>
        <position position="310"/>
    </location>
    <ligand>
        <name>S-adenosyl-L-methionine</name>
        <dbReference type="ChEBI" id="CHEBI:59789"/>
    </ligand>
</feature>
<feature type="binding site" evidence="1">
    <location>
        <position position="326"/>
    </location>
    <ligand>
        <name>S-adenosyl-L-methionine</name>
        <dbReference type="ChEBI" id="CHEBI:59789"/>
    </ligand>
</feature>
<feature type="binding site" evidence="1">
    <location>
        <position position="353"/>
    </location>
    <ligand>
        <name>S-adenosyl-L-methionine</name>
        <dbReference type="ChEBI" id="CHEBI:59789"/>
    </ligand>
</feature>
<feature type="binding site" evidence="1">
    <location>
        <position position="374"/>
    </location>
    <ligand>
        <name>S-adenosyl-L-methionine</name>
        <dbReference type="ChEBI" id="CHEBI:59789"/>
    </ligand>
</feature>
<proteinExistence type="inferred from homology"/>
<comment type="function">
    <text evidence="1">Catalyzes the formation of 5-methyl-uridine at position 1939 (m5U1939) in 23S rRNA.</text>
</comment>
<comment type="catalytic activity">
    <reaction evidence="1">
        <text>uridine(1939) in 23S rRNA + S-adenosyl-L-methionine = 5-methyluridine(1939) in 23S rRNA + S-adenosyl-L-homocysteine + H(+)</text>
        <dbReference type="Rhea" id="RHEA:42908"/>
        <dbReference type="Rhea" id="RHEA-COMP:10278"/>
        <dbReference type="Rhea" id="RHEA-COMP:10279"/>
        <dbReference type="ChEBI" id="CHEBI:15378"/>
        <dbReference type="ChEBI" id="CHEBI:57856"/>
        <dbReference type="ChEBI" id="CHEBI:59789"/>
        <dbReference type="ChEBI" id="CHEBI:65315"/>
        <dbReference type="ChEBI" id="CHEBI:74447"/>
        <dbReference type="EC" id="2.1.1.190"/>
    </reaction>
</comment>
<comment type="similarity">
    <text evidence="1">Belongs to the class I-like SAM-binding methyltransferase superfamily. RNA M5U methyltransferase family. RlmD subfamily.</text>
</comment>
<evidence type="ECO:0000255" key="1">
    <source>
        <dbReference type="HAMAP-Rule" id="MF_01010"/>
    </source>
</evidence>
<name>RLMD_LEGPL</name>